<sequence length="420" mass="48283">MIKIPRGTQDILPEDSKKWRYIENQLDELMTFYNYKEIRTPIFESTDLFARGVGDSTDVVQKEMYTFKDKGDRSITLRPEGTAAVVRSYIEHKMQGNPNQPIKLYYNGPMFRYERKQKGRYRQFNQFGVEAIGAENPSVDAEVLAMVMHIYQSFGLKHLKLVINSVGDMASRKEYNEALVKHFEPVIHEFCSDCQSRLHTNPMRILDCKVDRDKEAIKTAPRITDFLNEESKAYYEQVKAYLDDLGIPYIEDPNLVRGLDYYTHTAFELMMDNPNYDGAITTLCGGGRYNGLLELLDGPSETGIGFALSIERLLLALEEEGIELDIEENLDLFIVTMGDQADRYAVKLLNHLRHNGIKADKDYLQRKIKGQMKQADRLGAKFTIVIGDQELENNKIDVKNMTTGESETIELDALVEYFKK</sequence>
<reference key="1">
    <citation type="journal article" date="2007" name="PLoS ONE">
        <title>Molecular correlates of host specialization in Staphylococcus aureus.</title>
        <authorList>
            <person name="Herron-Olson L."/>
            <person name="Fitzgerald J.R."/>
            <person name="Musser J.M."/>
            <person name="Kapur V."/>
        </authorList>
    </citation>
    <scope>NUCLEOTIDE SEQUENCE [LARGE SCALE GENOMIC DNA]</scope>
    <source>
        <strain>bovine RF122 / ET3-1</strain>
    </source>
</reference>
<organism>
    <name type="scientific">Staphylococcus aureus (strain bovine RF122 / ET3-1)</name>
    <dbReference type="NCBI Taxonomy" id="273036"/>
    <lineage>
        <taxon>Bacteria</taxon>
        <taxon>Bacillati</taxon>
        <taxon>Bacillota</taxon>
        <taxon>Bacilli</taxon>
        <taxon>Bacillales</taxon>
        <taxon>Staphylococcaceae</taxon>
        <taxon>Staphylococcus</taxon>
    </lineage>
</organism>
<gene>
    <name evidence="1" type="primary">hisS</name>
    <name type="ordered locus">SAB1500c</name>
</gene>
<dbReference type="EC" id="6.1.1.21" evidence="1"/>
<dbReference type="EMBL" id="AJ938182">
    <property type="protein sequence ID" value="CAI81189.1"/>
    <property type="molecule type" value="Genomic_DNA"/>
</dbReference>
<dbReference type="RefSeq" id="WP_000590826.1">
    <property type="nucleotide sequence ID" value="NC_007622.1"/>
</dbReference>
<dbReference type="SMR" id="Q2YT99"/>
<dbReference type="KEGG" id="sab:SAB1500c"/>
<dbReference type="HOGENOM" id="CLU_025113_1_1_9"/>
<dbReference type="GO" id="GO:0005737">
    <property type="term" value="C:cytoplasm"/>
    <property type="evidence" value="ECO:0007669"/>
    <property type="project" value="UniProtKB-SubCell"/>
</dbReference>
<dbReference type="GO" id="GO:0005524">
    <property type="term" value="F:ATP binding"/>
    <property type="evidence" value="ECO:0007669"/>
    <property type="project" value="UniProtKB-UniRule"/>
</dbReference>
<dbReference type="GO" id="GO:0140096">
    <property type="term" value="F:catalytic activity, acting on a protein"/>
    <property type="evidence" value="ECO:0007669"/>
    <property type="project" value="UniProtKB-ARBA"/>
</dbReference>
<dbReference type="GO" id="GO:0004821">
    <property type="term" value="F:histidine-tRNA ligase activity"/>
    <property type="evidence" value="ECO:0007669"/>
    <property type="project" value="UniProtKB-UniRule"/>
</dbReference>
<dbReference type="GO" id="GO:0016740">
    <property type="term" value="F:transferase activity"/>
    <property type="evidence" value="ECO:0007669"/>
    <property type="project" value="UniProtKB-ARBA"/>
</dbReference>
<dbReference type="GO" id="GO:0006427">
    <property type="term" value="P:histidyl-tRNA aminoacylation"/>
    <property type="evidence" value="ECO:0007669"/>
    <property type="project" value="UniProtKB-UniRule"/>
</dbReference>
<dbReference type="CDD" id="cd00738">
    <property type="entry name" value="HGTP_anticodon"/>
    <property type="match status" value="1"/>
</dbReference>
<dbReference type="CDD" id="cd00773">
    <property type="entry name" value="HisRS-like_core"/>
    <property type="match status" value="1"/>
</dbReference>
<dbReference type="FunFam" id="3.30.930.10:FF:000005">
    <property type="entry name" value="Histidine--tRNA ligase"/>
    <property type="match status" value="1"/>
</dbReference>
<dbReference type="Gene3D" id="3.40.50.800">
    <property type="entry name" value="Anticodon-binding domain"/>
    <property type="match status" value="1"/>
</dbReference>
<dbReference type="Gene3D" id="3.30.930.10">
    <property type="entry name" value="Bira Bifunctional Protein, Domain 2"/>
    <property type="match status" value="1"/>
</dbReference>
<dbReference type="HAMAP" id="MF_00127">
    <property type="entry name" value="His_tRNA_synth"/>
    <property type="match status" value="1"/>
</dbReference>
<dbReference type="InterPro" id="IPR006195">
    <property type="entry name" value="aa-tRNA-synth_II"/>
</dbReference>
<dbReference type="InterPro" id="IPR045864">
    <property type="entry name" value="aa-tRNA-synth_II/BPL/LPL"/>
</dbReference>
<dbReference type="InterPro" id="IPR004154">
    <property type="entry name" value="Anticodon-bd"/>
</dbReference>
<dbReference type="InterPro" id="IPR036621">
    <property type="entry name" value="Anticodon-bd_dom_sf"/>
</dbReference>
<dbReference type="InterPro" id="IPR015807">
    <property type="entry name" value="His-tRNA-ligase"/>
</dbReference>
<dbReference type="InterPro" id="IPR041715">
    <property type="entry name" value="HisRS-like_core"/>
</dbReference>
<dbReference type="InterPro" id="IPR004516">
    <property type="entry name" value="HisRS/HisZ"/>
</dbReference>
<dbReference type="NCBIfam" id="TIGR00442">
    <property type="entry name" value="hisS"/>
    <property type="match status" value="1"/>
</dbReference>
<dbReference type="PANTHER" id="PTHR43707:SF1">
    <property type="entry name" value="HISTIDINE--TRNA LIGASE, MITOCHONDRIAL-RELATED"/>
    <property type="match status" value="1"/>
</dbReference>
<dbReference type="PANTHER" id="PTHR43707">
    <property type="entry name" value="HISTIDYL-TRNA SYNTHETASE"/>
    <property type="match status" value="1"/>
</dbReference>
<dbReference type="Pfam" id="PF03129">
    <property type="entry name" value="HGTP_anticodon"/>
    <property type="match status" value="1"/>
</dbReference>
<dbReference type="Pfam" id="PF13393">
    <property type="entry name" value="tRNA-synt_His"/>
    <property type="match status" value="1"/>
</dbReference>
<dbReference type="PIRSF" id="PIRSF001549">
    <property type="entry name" value="His-tRNA_synth"/>
    <property type="match status" value="1"/>
</dbReference>
<dbReference type="SUPFAM" id="SSF52954">
    <property type="entry name" value="Class II aaRS ABD-related"/>
    <property type="match status" value="1"/>
</dbReference>
<dbReference type="SUPFAM" id="SSF55681">
    <property type="entry name" value="Class II aaRS and biotin synthetases"/>
    <property type="match status" value="1"/>
</dbReference>
<dbReference type="PROSITE" id="PS50862">
    <property type="entry name" value="AA_TRNA_LIGASE_II"/>
    <property type="match status" value="1"/>
</dbReference>
<name>SYH_STAAB</name>
<comment type="catalytic activity">
    <reaction evidence="1">
        <text>tRNA(His) + L-histidine + ATP = L-histidyl-tRNA(His) + AMP + diphosphate + H(+)</text>
        <dbReference type="Rhea" id="RHEA:17313"/>
        <dbReference type="Rhea" id="RHEA-COMP:9665"/>
        <dbReference type="Rhea" id="RHEA-COMP:9689"/>
        <dbReference type="ChEBI" id="CHEBI:15378"/>
        <dbReference type="ChEBI" id="CHEBI:30616"/>
        <dbReference type="ChEBI" id="CHEBI:33019"/>
        <dbReference type="ChEBI" id="CHEBI:57595"/>
        <dbReference type="ChEBI" id="CHEBI:78442"/>
        <dbReference type="ChEBI" id="CHEBI:78527"/>
        <dbReference type="ChEBI" id="CHEBI:456215"/>
        <dbReference type="EC" id="6.1.1.21"/>
    </reaction>
</comment>
<comment type="subunit">
    <text evidence="1">Homodimer.</text>
</comment>
<comment type="subcellular location">
    <subcellularLocation>
        <location evidence="1">Cytoplasm</location>
    </subcellularLocation>
</comment>
<comment type="similarity">
    <text evidence="1">Belongs to the class-II aminoacyl-tRNA synthetase family.</text>
</comment>
<evidence type="ECO:0000255" key="1">
    <source>
        <dbReference type="HAMAP-Rule" id="MF_00127"/>
    </source>
</evidence>
<accession>Q2YT99</accession>
<keyword id="KW-0030">Aminoacyl-tRNA synthetase</keyword>
<keyword id="KW-0067">ATP-binding</keyword>
<keyword id="KW-0963">Cytoplasm</keyword>
<keyword id="KW-0436">Ligase</keyword>
<keyword id="KW-0547">Nucleotide-binding</keyword>
<keyword id="KW-0648">Protein biosynthesis</keyword>
<protein>
    <recommendedName>
        <fullName evidence="1">Histidine--tRNA ligase</fullName>
        <ecNumber evidence="1">6.1.1.21</ecNumber>
    </recommendedName>
    <alternativeName>
        <fullName evidence="1">Histidyl-tRNA synthetase</fullName>
        <shortName evidence="1">HisRS</shortName>
    </alternativeName>
</protein>
<feature type="chain" id="PRO_1000016461" description="Histidine--tRNA ligase">
    <location>
        <begin position="1"/>
        <end position="420"/>
    </location>
</feature>
<proteinExistence type="inferred from homology"/>